<reference key="1">
    <citation type="journal article" date="2007" name="PLoS ONE">
        <title>Analysis of the neurotoxin complex genes in Clostridium botulinum A1-A4 and B1 strains: BoNT/A3, /Ba4 and /B1 clusters are located within plasmids.</title>
        <authorList>
            <person name="Smith T.J."/>
            <person name="Hill K.K."/>
            <person name="Foley B.T."/>
            <person name="Detter J.C."/>
            <person name="Munk A.C."/>
            <person name="Bruce D.C."/>
            <person name="Doggett N.A."/>
            <person name="Smith L.A."/>
            <person name="Marks J.D."/>
            <person name="Xie G."/>
            <person name="Brettin T.S."/>
        </authorList>
    </citation>
    <scope>NUCLEOTIDE SEQUENCE [LARGE SCALE GENOMIC DNA]</scope>
    <source>
        <strain>Loch Maree / Type A3</strain>
    </source>
</reference>
<accession>B1KT98</accession>
<sequence length="49" mass="5902">MRVKVTLACTECKRRNYNTMKNKKNDPDRLEMNKYCPHCHKHAAHKETK</sequence>
<feature type="chain" id="PRO_0000356435" description="Large ribosomal subunit protein bL33">
    <location>
        <begin position="1"/>
        <end position="49"/>
    </location>
</feature>
<gene>
    <name evidence="1" type="primary">rpmG</name>
    <name type="ordered locus">CLK_2939</name>
</gene>
<comment type="similarity">
    <text evidence="1">Belongs to the bacterial ribosomal protein bL33 family.</text>
</comment>
<protein>
    <recommendedName>
        <fullName evidence="1">Large ribosomal subunit protein bL33</fullName>
    </recommendedName>
    <alternativeName>
        <fullName evidence="2">50S ribosomal protein L33</fullName>
    </alternativeName>
</protein>
<organism>
    <name type="scientific">Clostridium botulinum (strain Loch Maree / Type A3)</name>
    <dbReference type="NCBI Taxonomy" id="498214"/>
    <lineage>
        <taxon>Bacteria</taxon>
        <taxon>Bacillati</taxon>
        <taxon>Bacillota</taxon>
        <taxon>Clostridia</taxon>
        <taxon>Eubacteriales</taxon>
        <taxon>Clostridiaceae</taxon>
        <taxon>Clostridium</taxon>
    </lineage>
</organism>
<keyword id="KW-0687">Ribonucleoprotein</keyword>
<keyword id="KW-0689">Ribosomal protein</keyword>
<dbReference type="EMBL" id="CP000962">
    <property type="protein sequence ID" value="ACA55941.1"/>
    <property type="molecule type" value="Genomic_DNA"/>
</dbReference>
<dbReference type="RefSeq" id="WP_003357626.1">
    <property type="nucleotide sequence ID" value="NC_010520.1"/>
</dbReference>
<dbReference type="SMR" id="B1KT98"/>
<dbReference type="GeneID" id="5187732"/>
<dbReference type="KEGG" id="cbl:CLK_2939"/>
<dbReference type="HOGENOM" id="CLU_190949_0_2_9"/>
<dbReference type="GO" id="GO:0005737">
    <property type="term" value="C:cytoplasm"/>
    <property type="evidence" value="ECO:0007669"/>
    <property type="project" value="UniProtKB-ARBA"/>
</dbReference>
<dbReference type="GO" id="GO:1990904">
    <property type="term" value="C:ribonucleoprotein complex"/>
    <property type="evidence" value="ECO:0007669"/>
    <property type="project" value="UniProtKB-KW"/>
</dbReference>
<dbReference type="GO" id="GO:0005840">
    <property type="term" value="C:ribosome"/>
    <property type="evidence" value="ECO:0007669"/>
    <property type="project" value="UniProtKB-KW"/>
</dbReference>
<dbReference type="GO" id="GO:0003735">
    <property type="term" value="F:structural constituent of ribosome"/>
    <property type="evidence" value="ECO:0007669"/>
    <property type="project" value="InterPro"/>
</dbReference>
<dbReference type="GO" id="GO:0006412">
    <property type="term" value="P:translation"/>
    <property type="evidence" value="ECO:0007669"/>
    <property type="project" value="UniProtKB-UniRule"/>
</dbReference>
<dbReference type="Gene3D" id="2.20.28.120">
    <property type="entry name" value="Ribosomal protein L33"/>
    <property type="match status" value="1"/>
</dbReference>
<dbReference type="HAMAP" id="MF_00294">
    <property type="entry name" value="Ribosomal_bL33"/>
    <property type="match status" value="1"/>
</dbReference>
<dbReference type="InterPro" id="IPR001705">
    <property type="entry name" value="Ribosomal_bL33"/>
</dbReference>
<dbReference type="InterPro" id="IPR018264">
    <property type="entry name" value="Ribosomal_bL33_CS"/>
</dbReference>
<dbReference type="InterPro" id="IPR038584">
    <property type="entry name" value="Ribosomal_bL33_sf"/>
</dbReference>
<dbReference type="InterPro" id="IPR011332">
    <property type="entry name" value="Ribosomal_zn-bd"/>
</dbReference>
<dbReference type="NCBIfam" id="NF001764">
    <property type="entry name" value="PRK00504.1"/>
    <property type="match status" value="1"/>
</dbReference>
<dbReference type="NCBIfam" id="NF001860">
    <property type="entry name" value="PRK00595.1"/>
    <property type="match status" value="1"/>
</dbReference>
<dbReference type="NCBIfam" id="TIGR01023">
    <property type="entry name" value="rpmG_bact"/>
    <property type="match status" value="1"/>
</dbReference>
<dbReference type="PANTHER" id="PTHR43168">
    <property type="entry name" value="50S RIBOSOMAL PROTEIN L33, CHLOROPLASTIC"/>
    <property type="match status" value="1"/>
</dbReference>
<dbReference type="PANTHER" id="PTHR43168:SF2">
    <property type="entry name" value="LARGE RIBOSOMAL SUBUNIT PROTEIN BL33C"/>
    <property type="match status" value="1"/>
</dbReference>
<dbReference type="Pfam" id="PF00471">
    <property type="entry name" value="Ribosomal_L33"/>
    <property type="match status" value="1"/>
</dbReference>
<dbReference type="SUPFAM" id="SSF57829">
    <property type="entry name" value="Zn-binding ribosomal proteins"/>
    <property type="match status" value="1"/>
</dbReference>
<dbReference type="PROSITE" id="PS00582">
    <property type="entry name" value="RIBOSOMAL_L33"/>
    <property type="match status" value="1"/>
</dbReference>
<evidence type="ECO:0000255" key="1">
    <source>
        <dbReference type="HAMAP-Rule" id="MF_00294"/>
    </source>
</evidence>
<evidence type="ECO:0000305" key="2"/>
<name>RL33_CLOBM</name>
<proteinExistence type="inferred from homology"/>